<keyword id="KW-0963">Cytoplasm</keyword>
<keyword id="KW-0903">Direct protein sequencing</keyword>
<keyword id="KW-0349">Heme</keyword>
<keyword id="KW-0408">Iron</keyword>
<keyword id="KW-0479">Metal-binding</keyword>
<keyword id="KW-0535">Nitrogen fixation</keyword>
<keyword id="KW-0539">Nucleus</keyword>
<keyword id="KW-0560">Oxidoreductase</keyword>
<keyword id="KW-0561">Oxygen transport</keyword>
<keyword id="KW-0813">Transport</keyword>
<accession>P08054</accession>
<gene>
    <name evidence="9" type="primary">HBI</name>
</gene>
<sequence>MALTEKQEALLKQSWEVLKQNIPAHSLRLFALIIEAAPESKYVFSFLKDSNEIPENNPKLKAHAAVIFKTICESATELRQKGHAVWDNNTLKRLGSIHLKNKITDPHFEVMKGALLGTIKEAIKENWSDEMGQAWTEAYNQLVATIKAEMKE</sequence>
<dbReference type="EC" id="1.7.2.-" evidence="3"/>
<dbReference type="PIR" id="S00560">
    <property type="entry name" value="GPUGNI"/>
</dbReference>
<dbReference type="SMR" id="P08054"/>
<dbReference type="GO" id="GO:0005737">
    <property type="term" value="C:cytoplasm"/>
    <property type="evidence" value="ECO:0007669"/>
    <property type="project" value="UniProtKB-SubCell"/>
</dbReference>
<dbReference type="GO" id="GO:0005634">
    <property type="term" value="C:nucleus"/>
    <property type="evidence" value="ECO:0007669"/>
    <property type="project" value="UniProtKB-SubCell"/>
</dbReference>
<dbReference type="GO" id="GO:0020037">
    <property type="term" value="F:heme binding"/>
    <property type="evidence" value="ECO:0007669"/>
    <property type="project" value="InterPro"/>
</dbReference>
<dbReference type="GO" id="GO:0046872">
    <property type="term" value="F:metal ion binding"/>
    <property type="evidence" value="ECO:0007669"/>
    <property type="project" value="UniProtKB-KW"/>
</dbReference>
<dbReference type="GO" id="GO:0016491">
    <property type="term" value="F:oxidoreductase activity"/>
    <property type="evidence" value="ECO:0007669"/>
    <property type="project" value="UniProtKB-KW"/>
</dbReference>
<dbReference type="GO" id="GO:0019825">
    <property type="term" value="F:oxygen binding"/>
    <property type="evidence" value="ECO:0007669"/>
    <property type="project" value="InterPro"/>
</dbReference>
<dbReference type="GO" id="GO:0005344">
    <property type="term" value="F:oxygen carrier activity"/>
    <property type="evidence" value="ECO:0007669"/>
    <property type="project" value="UniProtKB-KW"/>
</dbReference>
<dbReference type="CDD" id="cd08923">
    <property type="entry name" value="class1-2_nsHbs_Lbs"/>
    <property type="match status" value="1"/>
</dbReference>
<dbReference type="Gene3D" id="1.10.490.10">
    <property type="entry name" value="Globins"/>
    <property type="match status" value="1"/>
</dbReference>
<dbReference type="InterPro" id="IPR000971">
    <property type="entry name" value="Globin"/>
</dbReference>
<dbReference type="InterPro" id="IPR009050">
    <property type="entry name" value="Globin-like_sf"/>
</dbReference>
<dbReference type="InterPro" id="IPR012292">
    <property type="entry name" value="Globin/Proto"/>
</dbReference>
<dbReference type="InterPro" id="IPR001032">
    <property type="entry name" value="Leghaemoglobin-like"/>
</dbReference>
<dbReference type="InterPro" id="IPR019824">
    <property type="entry name" value="Leghaemoglobin_Fe_BS"/>
</dbReference>
<dbReference type="PANTHER" id="PTHR22924">
    <property type="entry name" value="LEGHEMOGLOBIN-RELATED"/>
    <property type="match status" value="1"/>
</dbReference>
<dbReference type="PANTHER" id="PTHR22924:SF92">
    <property type="entry name" value="NON-SYMBIOTIC HEMOGLOBIN 2"/>
    <property type="match status" value="1"/>
</dbReference>
<dbReference type="Pfam" id="PF00042">
    <property type="entry name" value="Globin"/>
    <property type="match status" value="1"/>
</dbReference>
<dbReference type="PRINTS" id="PR00188">
    <property type="entry name" value="PLANTGLOBIN"/>
</dbReference>
<dbReference type="SUPFAM" id="SSF46458">
    <property type="entry name" value="Globin-like"/>
    <property type="match status" value="1"/>
</dbReference>
<dbReference type="PROSITE" id="PS01033">
    <property type="entry name" value="GLOBIN"/>
    <property type="match status" value="1"/>
</dbReference>
<dbReference type="PROSITE" id="PS00208">
    <property type="entry name" value="PLANT_GLOBIN"/>
    <property type="match status" value="1"/>
</dbReference>
<comment type="function">
    <text evidence="2 3 5 6">Phytoglobin that reduces nitrite to nitric oxide (NO) under anoxic conditions (e.g. during flooding or in waterlogged soil) and upon root nodulation (By similarity). Required for general plant development and during nodulation, especially for the onset of symbiosis (By similarity). Monitors nitric oxide (NO) levels during early phase of the nitrogen-fixing symbiosis and buffers oxygen in functioning nodules (By similarity). May not function as an oxygen storage or transport protein (By similarity). Has an unusually high affinity for O(2) through a hexacoordinate heme iron because of a very low dissociation constant (By similarity).</text>
</comment>
<comment type="catalytic activity">
    <reaction evidence="3">
        <text>Fe(III)-heme b-[protein] + nitric oxide + H2O = Fe(II)-heme b-[protein] + nitrite + 2 H(+)</text>
        <dbReference type="Rhea" id="RHEA:77711"/>
        <dbReference type="Rhea" id="RHEA-COMP:18975"/>
        <dbReference type="Rhea" id="RHEA-COMP:18976"/>
        <dbReference type="ChEBI" id="CHEBI:15377"/>
        <dbReference type="ChEBI" id="CHEBI:15378"/>
        <dbReference type="ChEBI" id="CHEBI:16301"/>
        <dbReference type="ChEBI" id="CHEBI:16480"/>
        <dbReference type="ChEBI" id="CHEBI:55376"/>
        <dbReference type="ChEBI" id="CHEBI:60344"/>
    </reaction>
    <physiologicalReaction direction="right-to-left" evidence="3">
        <dbReference type="Rhea" id="RHEA:77713"/>
    </physiologicalReaction>
</comment>
<comment type="cofactor">
    <cofactor evidence="4">
        <name>heme b</name>
        <dbReference type="ChEBI" id="CHEBI:60344"/>
    </cofactor>
    <text evidence="4">Binds 1 heme group per subunit.</text>
</comment>
<comment type="subunit">
    <text evidence="3">Homodimer.</text>
</comment>
<comment type="subcellular location">
    <subcellularLocation>
        <location evidence="1">Cytoplasm</location>
    </subcellularLocation>
    <subcellularLocation>
        <location evidence="1">Nucleus</location>
    </subcellularLocation>
</comment>
<comment type="tissue specificity">
    <text evidence="11">Root nodules.</text>
</comment>
<comment type="similarity">
    <text evidence="10">Belongs to the plant globin family.</text>
</comment>
<evidence type="ECO:0000250" key="1">
    <source>
        <dbReference type="UniProtKB" id="A2XE98"/>
    </source>
</evidence>
<evidence type="ECO:0000250" key="2">
    <source>
        <dbReference type="UniProtKB" id="I3SPW2"/>
    </source>
</evidence>
<evidence type="ECO:0000250" key="3">
    <source>
        <dbReference type="UniProtKB" id="O04986"/>
    </source>
</evidence>
<evidence type="ECO:0000250" key="4">
    <source>
        <dbReference type="UniProtKB" id="P68168"/>
    </source>
</evidence>
<evidence type="ECO:0000250" key="5">
    <source>
        <dbReference type="UniProtKB" id="Q3C1F4"/>
    </source>
</evidence>
<evidence type="ECO:0000250" key="6">
    <source>
        <dbReference type="UniProtKB" id="Q42831"/>
    </source>
</evidence>
<evidence type="ECO:0000255" key="7">
    <source>
        <dbReference type="PROSITE-ProRule" id="PRU00238"/>
    </source>
</evidence>
<evidence type="ECO:0000269" key="8">
    <source ref="1"/>
</evidence>
<evidence type="ECO:0000303" key="9">
    <source ref="1"/>
</evidence>
<evidence type="ECO:0000305" key="10"/>
<evidence type="ECO:0000305" key="11">
    <source ref="1"/>
</evidence>
<name>HBP1_CASGL</name>
<organism>
    <name type="scientific">Casuarina glauca</name>
    <name type="common">Swamp oak</name>
    <dbReference type="NCBI Taxonomy" id="3522"/>
    <lineage>
        <taxon>Eukaryota</taxon>
        <taxon>Viridiplantae</taxon>
        <taxon>Streptophyta</taxon>
        <taxon>Embryophyta</taxon>
        <taxon>Tracheophyta</taxon>
        <taxon>Spermatophyta</taxon>
        <taxon>Magnoliopsida</taxon>
        <taxon>eudicotyledons</taxon>
        <taxon>Gunneridae</taxon>
        <taxon>Pentapetalae</taxon>
        <taxon>rosids</taxon>
        <taxon>fabids</taxon>
        <taxon>Fagales</taxon>
        <taxon>Casuarinaceae</taxon>
        <taxon>Casuarina</taxon>
    </lineage>
</organism>
<feature type="initiator methionine" description="Removed" evidence="8">
    <location>
        <position position="1"/>
    </location>
</feature>
<feature type="chain" id="PRO_0000192978" description="Anaerobic nitrite reductase HBI">
    <location>
        <begin position="2"/>
        <end position="152"/>
    </location>
</feature>
<feature type="domain" description="Globin" evidence="7">
    <location>
        <begin position="2"/>
        <end position="151"/>
    </location>
</feature>
<feature type="short sequence motif" description="Homodimerization" evidence="3">
    <location>
        <begin position="35"/>
        <end position="39"/>
    </location>
</feature>
<feature type="short sequence motif" description="Homodimerization" evidence="3">
    <location>
        <begin position="105"/>
        <end position="117"/>
    </location>
</feature>
<feature type="binding site" evidence="4">
    <location>
        <position position="45"/>
    </location>
    <ligand>
        <name>heme b</name>
        <dbReference type="ChEBI" id="CHEBI:60344"/>
    </ligand>
</feature>
<feature type="binding site" evidence="3">
    <location>
        <position position="59"/>
    </location>
    <ligand>
        <name>heme b</name>
        <dbReference type="ChEBI" id="CHEBI:60344"/>
    </ligand>
</feature>
<feature type="binding site" description="distal binding residue" evidence="7">
    <location>
        <position position="63"/>
    </location>
    <ligand>
        <name>heme b</name>
        <dbReference type="ChEBI" id="CHEBI:60344"/>
    </ligand>
    <ligandPart>
        <name>Fe</name>
        <dbReference type="ChEBI" id="CHEBI:18248"/>
    </ligandPart>
</feature>
<feature type="binding site" evidence="3">
    <location>
        <position position="93"/>
    </location>
    <ligand>
        <name>heme b</name>
        <dbReference type="ChEBI" id="CHEBI:60344"/>
    </ligand>
</feature>
<feature type="binding site" description="proximal binding residue" evidence="7">
    <location>
        <position position="98"/>
    </location>
    <ligand>
        <name>heme b</name>
        <dbReference type="ChEBI" id="CHEBI:60344"/>
    </ligand>
    <ligandPart>
        <name>Fe</name>
        <dbReference type="ChEBI" id="CHEBI:18248"/>
    </ligandPart>
</feature>
<proteinExistence type="evidence at protein level"/>
<reference key="1">
    <citation type="journal article" date="1988" name="FEBS Lett.">
        <title>Amino acid sequence of hemoglobin I from root nodules of the non-leguminous Casuarina glauca-Frankia symbiosis.</title>
        <authorList>
            <person name="Kortt A.A."/>
            <person name="Inglis A.S."/>
            <person name="Fleming A.I."/>
            <person name="Appleby C.A."/>
        </authorList>
    </citation>
    <scope>PROTEIN SEQUENCE OF 2-152</scope>
    <scope>TISSUE SPECIFICITY</scope>
    <source>
        <tissue>Root nodule</tissue>
    </source>
</reference>
<protein>
    <recommendedName>
        <fullName evidence="3">Anaerobic nitrite reductase HBI</fullName>
        <ecNumber evidence="3">1.7.2.-</ecNumber>
    </recommendedName>
    <alternativeName>
        <fullName evidence="9">Hemoglobin I</fullName>
    </alternativeName>
    <alternativeName>
        <fullName evidence="9">Hemoglobin-1</fullName>
    </alternativeName>
</protein>